<reference key="1">
    <citation type="submission" date="2008-03" db="EMBL/GenBank/DDBJ databases">
        <title>Complete sequence of Leptothrix cholodnii SP-6.</title>
        <authorList>
            <consortium name="US DOE Joint Genome Institute"/>
            <person name="Copeland A."/>
            <person name="Lucas S."/>
            <person name="Lapidus A."/>
            <person name="Glavina del Rio T."/>
            <person name="Dalin E."/>
            <person name="Tice H."/>
            <person name="Bruce D."/>
            <person name="Goodwin L."/>
            <person name="Pitluck S."/>
            <person name="Chertkov O."/>
            <person name="Brettin T."/>
            <person name="Detter J.C."/>
            <person name="Han C."/>
            <person name="Kuske C.R."/>
            <person name="Schmutz J."/>
            <person name="Larimer F."/>
            <person name="Land M."/>
            <person name="Hauser L."/>
            <person name="Kyrpides N."/>
            <person name="Lykidis A."/>
            <person name="Emerson D."/>
            <person name="Richardson P."/>
        </authorList>
    </citation>
    <scope>NUCLEOTIDE SEQUENCE [LARGE SCALE GENOMIC DNA]</scope>
    <source>
        <strain>ATCC 51168 / LMG 8142 / SP-6</strain>
    </source>
</reference>
<gene>
    <name evidence="1" type="primary">rplJ</name>
    <name type="ordered locus">Lcho_3869</name>
</gene>
<evidence type="ECO:0000255" key="1">
    <source>
        <dbReference type="HAMAP-Rule" id="MF_00362"/>
    </source>
</evidence>
<evidence type="ECO:0000305" key="2"/>
<dbReference type="EMBL" id="CP001013">
    <property type="protein sequence ID" value="ACB36123.1"/>
    <property type="molecule type" value="Genomic_DNA"/>
</dbReference>
<dbReference type="RefSeq" id="WP_012348870.1">
    <property type="nucleotide sequence ID" value="NC_010524.1"/>
</dbReference>
<dbReference type="SMR" id="B1Y7H5"/>
<dbReference type="STRING" id="395495.Lcho_3869"/>
<dbReference type="KEGG" id="lch:Lcho_3869"/>
<dbReference type="eggNOG" id="COG0244">
    <property type="taxonomic scope" value="Bacteria"/>
</dbReference>
<dbReference type="HOGENOM" id="CLU_092227_0_1_4"/>
<dbReference type="OrthoDB" id="9808307at2"/>
<dbReference type="Proteomes" id="UP000001693">
    <property type="component" value="Chromosome"/>
</dbReference>
<dbReference type="GO" id="GO:1990904">
    <property type="term" value="C:ribonucleoprotein complex"/>
    <property type="evidence" value="ECO:0007669"/>
    <property type="project" value="UniProtKB-KW"/>
</dbReference>
<dbReference type="GO" id="GO:0005840">
    <property type="term" value="C:ribosome"/>
    <property type="evidence" value="ECO:0007669"/>
    <property type="project" value="UniProtKB-KW"/>
</dbReference>
<dbReference type="GO" id="GO:0070180">
    <property type="term" value="F:large ribosomal subunit rRNA binding"/>
    <property type="evidence" value="ECO:0007669"/>
    <property type="project" value="UniProtKB-UniRule"/>
</dbReference>
<dbReference type="GO" id="GO:0006412">
    <property type="term" value="P:translation"/>
    <property type="evidence" value="ECO:0007669"/>
    <property type="project" value="UniProtKB-UniRule"/>
</dbReference>
<dbReference type="CDD" id="cd05797">
    <property type="entry name" value="Ribosomal_L10"/>
    <property type="match status" value="1"/>
</dbReference>
<dbReference type="Gene3D" id="3.30.70.1730">
    <property type="match status" value="1"/>
</dbReference>
<dbReference type="Gene3D" id="6.10.250.290">
    <property type="match status" value="1"/>
</dbReference>
<dbReference type="HAMAP" id="MF_00362">
    <property type="entry name" value="Ribosomal_uL10"/>
    <property type="match status" value="1"/>
</dbReference>
<dbReference type="InterPro" id="IPR001790">
    <property type="entry name" value="Ribosomal_uL10"/>
</dbReference>
<dbReference type="InterPro" id="IPR043141">
    <property type="entry name" value="Ribosomal_uL10-like_sf"/>
</dbReference>
<dbReference type="InterPro" id="IPR022973">
    <property type="entry name" value="Ribosomal_uL10_bac"/>
</dbReference>
<dbReference type="InterPro" id="IPR047865">
    <property type="entry name" value="Ribosomal_uL10_bac_type"/>
</dbReference>
<dbReference type="NCBIfam" id="NF000955">
    <property type="entry name" value="PRK00099.1-1"/>
    <property type="match status" value="1"/>
</dbReference>
<dbReference type="PANTHER" id="PTHR11560">
    <property type="entry name" value="39S RIBOSOMAL PROTEIN L10, MITOCHONDRIAL"/>
    <property type="match status" value="1"/>
</dbReference>
<dbReference type="Pfam" id="PF00466">
    <property type="entry name" value="Ribosomal_L10"/>
    <property type="match status" value="1"/>
</dbReference>
<dbReference type="SUPFAM" id="SSF160369">
    <property type="entry name" value="Ribosomal protein L10-like"/>
    <property type="match status" value="1"/>
</dbReference>
<accession>B1Y7H5</accession>
<organism>
    <name type="scientific">Leptothrix cholodnii (strain ATCC 51168 / LMG 8142 / SP-6)</name>
    <name type="common">Leptothrix discophora (strain SP-6)</name>
    <dbReference type="NCBI Taxonomy" id="395495"/>
    <lineage>
        <taxon>Bacteria</taxon>
        <taxon>Pseudomonadati</taxon>
        <taxon>Pseudomonadota</taxon>
        <taxon>Betaproteobacteria</taxon>
        <taxon>Burkholderiales</taxon>
        <taxon>Sphaerotilaceae</taxon>
        <taxon>Leptothrix</taxon>
    </lineage>
</organism>
<feature type="chain" id="PRO_1000120982" description="Large ribosomal subunit protein uL10">
    <location>
        <begin position="1"/>
        <end position="182"/>
    </location>
</feature>
<proteinExistence type="inferred from homology"/>
<name>RL10_LEPCP</name>
<protein>
    <recommendedName>
        <fullName evidence="1">Large ribosomal subunit protein uL10</fullName>
    </recommendedName>
    <alternativeName>
        <fullName evidence="2">50S ribosomal protein L10</fullName>
    </alternativeName>
</protein>
<sequence>MSLNRNDKAAVVAEVAAQVARSQTLALAEYRGLTVADLDKLRRTAREQGVYLHVLKNTLARRAVAGTAFESAAESMSGPLIYGFSEDAIAAAKVVVDFAKTNDKLVLKGGAYAGKALDVNGIKALASIPSKEVLLAQFLGLLQSPISRTARVLAALAEKRAVPAAEEAVEATADVATEAAAG</sequence>
<keyword id="KW-1185">Reference proteome</keyword>
<keyword id="KW-0687">Ribonucleoprotein</keyword>
<keyword id="KW-0689">Ribosomal protein</keyword>
<keyword id="KW-0694">RNA-binding</keyword>
<keyword id="KW-0699">rRNA-binding</keyword>
<comment type="function">
    <text evidence="1">Forms part of the ribosomal stalk, playing a central role in the interaction of the ribosome with GTP-bound translation factors.</text>
</comment>
<comment type="subunit">
    <text evidence="1">Part of the ribosomal stalk of the 50S ribosomal subunit. The N-terminus interacts with L11 and the large rRNA to form the base of the stalk. The C-terminus forms an elongated spine to which L12 dimers bind in a sequential fashion forming a multimeric L10(L12)X complex.</text>
</comment>
<comment type="similarity">
    <text evidence="1">Belongs to the universal ribosomal protein uL10 family.</text>
</comment>